<feature type="chain" id="PRO_0000177349" description="Large ribosomal subunit protein bL35">
    <location>
        <begin position="1"/>
        <end position="64"/>
    </location>
</feature>
<feature type="region of interest" description="Disordered" evidence="2">
    <location>
        <begin position="1"/>
        <end position="55"/>
    </location>
</feature>
<feature type="compositionally biased region" description="Basic residues" evidence="2">
    <location>
        <begin position="23"/>
        <end position="39"/>
    </location>
</feature>
<reference key="1">
    <citation type="journal article" date="1998" name="Science">
        <title>Genome sequence of an obligate intracellular pathogen of humans: Chlamydia trachomatis.</title>
        <authorList>
            <person name="Stephens R.S."/>
            <person name="Kalman S."/>
            <person name="Lammel C.J."/>
            <person name="Fan J."/>
            <person name="Marathe R."/>
            <person name="Aravind L."/>
            <person name="Mitchell W.P."/>
            <person name="Olinger L."/>
            <person name="Tatusov R.L."/>
            <person name="Zhao Q."/>
            <person name="Koonin E.V."/>
            <person name="Davis R.W."/>
        </authorList>
    </citation>
    <scope>NUCLEOTIDE SEQUENCE [LARGE SCALE GENOMIC DNA]</scope>
    <source>
        <strain>ATCC VR-885 / DSM 19411 / UW-3/Cx</strain>
    </source>
</reference>
<gene>
    <name evidence="1" type="primary">rpmI</name>
    <name type="synonym">rl35</name>
    <name type="ordered locus">CT_834</name>
</gene>
<proteinExistence type="inferred from homology"/>
<name>RL35_CHLTR</name>
<protein>
    <recommendedName>
        <fullName evidence="1">Large ribosomal subunit protein bL35</fullName>
    </recommendedName>
    <alternativeName>
        <fullName evidence="3">50S ribosomal protein L35</fullName>
    </alternativeName>
</protein>
<evidence type="ECO:0000255" key="1">
    <source>
        <dbReference type="HAMAP-Rule" id="MF_00514"/>
    </source>
</evidence>
<evidence type="ECO:0000256" key="2">
    <source>
        <dbReference type="SAM" id="MobiDB-lite"/>
    </source>
</evidence>
<evidence type="ECO:0000305" key="3"/>
<sequence>MPKMKSNKSVAARFKLTGSGQLKRTRPGKRHKLSKRSSQQKRNLSKQPLVDQGQVGMYKRMMLV</sequence>
<comment type="similarity">
    <text evidence="1">Belongs to the bacterial ribosomal protein bL35 family.</text>
</comment>
<keyword id="KW-1185">Reference proteome</keyword>
<keyword id="KW-0687">Ribonucleoprotein</keyword>
<keyword id="KW-0689">Ribosomal protein</keyword>
<accession>P66267</accession>
<accession>O84841</accession>
<accession>Q9PL85</accession>
<dbReference type="EMBL" id="AE001273">
    <property type="protein sequence ID" value="AAC68431.1"/>
    <property type="molecule type" value="Genomic_DNA"/>
</dbReference>
<dbReference type="PIR" id="B71465">
    <property type="entry name" value="B71465"/>
</dbReference>
<dbReference type="RefSeq" id="NP_220355.1">
    <property type="nucleotide sequence ID" value="NC_000117.1"/>
</dbReference>
<dbReference type="RefSeq" id="WP_009872221.1">
    <property type="nucleotide sequence ID" value="NC_000117.1"/>
</dbReference>
<dbReference type="SMR" id="P66267"/>
<dbReference type="FunCoup" id="P66267">
    <property type="interactions" value="193"/>
</dbReference>
<dbReference type="STRING" id="272561.CT_834"/>
<dbReference type="EnsemblBacteria" id="AAC68431">
    <property type="protein sequence ID" value="AAC68431"/>
    <property type="gene ID" value="CT_834"/>
</dbReference>
<dbReference type="GeneID" id="884641"/>
<dbReference type="GeneID" id="93065712"/>
<dbReference type="KEGG" id="ctr:CT_834"/>
<dbReference type="PATRIC" id="fig|272561.5.peg.921"/>
<dbReference type="HOGENOM" id="CLU_169643_3_0_0"/>
<dbReference type="InParanoid" id="P66267"/>
<dbReference type="OrthoDB" id="47476at2"/>
<dbReference type="PRO" id="PR:P66267"/>
<dbReference type="Proteomes" id="UP000000431">
    <property type="component" value="Chromosome"/>
</dbReference>
<dbReference type="GO" id="GO:0022625">
    <property type="term" value="C:cytosolic large ribosomal subunit"/>
    <property type="evidence" value="ECO:0000318"/>
    <property type="project" value="GO_Central"/>
</dbReference>
<dbReference type="GO" id="GO:0003735">
    <property type="term" value="F:structural constituent of ribosome"/>
    <property type="evidence" value="ECO:0000318"/>
    <property type="project" value="GO_Central"/>
</dbReference>
<dbReference type="GO" id="GO:0006412">
    <property type="term" value="P:translation"/>
    <property type="evidence" value="ECO:0007669"/>
    <property type="project" value="UniProtKB-UniRule"/>
</dbReference>
<dbReference type="FunFam" id="4.10.410.60:FF:000001">
    <property type="entry name" value="50S ribosomal protein L35"/>
    <property type="match status" value="1"/>
</dbReference>
<dbReference type="Gene3D" id="4.10.410.60">
    <property type="match status" value="1"/>
</dbReference>
<dbReference type="HAMAP" id="MF_00514">
    <property type="entry name" value="Ribosomal_bL35"/>
    <property type="match status" value="1"/>
</dbReference>
<dbReference type="InterPro" id="IPR001706">
    <property type="entry name" value="Ribosomal_bL35"/>
</dbReference>
<dbReference type="InterPro" id="IPR021137">
    <property type="entry name" value="Ribosomal_bL35-like"/>
</dbReference>
<dbReference type="InterPro" id="IPR018265">
    <property type="entry name" value="Ribosomal_bL35_CS"/>
</dbReference>
<dbReference type="InterPro" id="IPR037229">
    <property type="entry name" value="Ribosomal_bL35_sf"/>
</dbReference>
<dbReference type="NCBIfam" id="TIGR00001">
    <property type="entry name" value="rpmI_bact"/>
    <property type="match status" value="1"/>
</dbReference>
<dbReference type="PANTHER" id="PTHR33343">
    <property type="entry name" value="54S RIBOSOMAL PROTEIN BL35M"/>
    <property type="match status" value="1"/>
</dbReference>
<dbReference type="PANTHER" id="PTHR33343:SF1">
    <property type="entry name" value="LARGE RIBOSOMAL SUBUNIT PROTEIN BL35M"/>
    <property type="match status" value="1"/>
</dbReference>
<dbReference type="Pfam" id="PF01632">
    <property type="entry name" value="Ribosomal_L35p"/>
    <property type="match status" value="1"/>
</dbReference>
<dbReference type="PRINTS" id="PR00064">
    <property type="entry name" value="RIBOSOMALL35"/>
</dbReference>
<dbReference type="SUPFAM" id="SSF143034">
    <property type="entry name" value="L35p-like"/>
    <property type="match status" value="1"/>
</dbReference>
<dbReference type="PROSITE" id="PS00936">
    <property type="entry name" value="RIBOSOMAL_L35"/>
    <property type="match status" value="1"/>
</dbReference>
<organism>
    <name type="scientific">Chlamydia trachomatis serovar D (strain ATCC VR-885 / DSM 19411 / UW-3/Cx)</name>
    <dbReference type="NCBI Taxonomy" id="272561"/>
    <lineage>
        <taxon>Bacteria</taxon>
        <taxon>Pseudomonadati</taxon>
        <taxon>Chlamydiota</taxon>
        <taxon>Chlamydiia</taxon>
        <taxon>Chlamydiales</taxon>
        <taxon>Chlamydiaceae</taxon>
        <taxon>Chlamydia/Chlamydophila group</taxon>
        <taxon>Chlamydia</taxon>
    </lineage>
</organism>